<reference key="1">
    <citation type="journal article" date="1986" name="J. Mol. Biol.">
        <title>Sequence of the short unique region, short repeats, and part of the long repeats of human cytomegalovirus.</title>
        <authorList>
            <person name="Weston K.M."/>
            <person name="Barrell B.G."/>
        </authorList>
    </citation>
    <scope>NUCLEOTIDE SEQUENCE [GENOMIC DNA]</scope>
</reference>
<reference key="2">
    <citation type="journal article" date="1990" name="Curr. Top. Microbiol. Immunol.">
        <title>Analysis of the protein-coding content of the sequence of human cytomegalovirus strain AD169.</title>
        <authorList>
            <person name="Chee M.S."/>
            <person name="Bankier A.T."/>
            <person name="Beck S."/>
            <person name="Bohni R."/>
            <person name="Brown C.M."/>
            <person name="Cerny R."/>
            <person name="Horsnell T."/>
            <person name="Hutchison C.A. III"/>
            <person name="Kouzarides T."/>
            <person name="Martignetti J.A."/>
            <person name="Preddie E."/>
            <person name="Satchwell S.C."/>
            <person name="Tomlinson P."/>
            <person name="Weston K.M."/>
            <person name="Barrell B.G."/>
        </authorList>
    </citation>
    <scope>NUCLEOTIDE SEQUENCE [LARGE SCALE GENOMIC DNA]</scope>
</reference>
<reference key="3">
    <citation type="journal article" date="2003" name="J. Gen. Virol.">
        <title>The human cytomegalovirus genome revisited: comparison with the chimpanzee cytomegalovirus genome.</title>
        <authorList>
            <person name="Davison A.J."/>
            <person name="Dolan A."/>
            <person name="Akter P."/>
            <person name="Addison C."/>
            <person name="Dargan D.J."/>
            <person name="Alcendor D.J."/>
            <person name="McGeoch D.J."/>
            <person name="Hayward G.S."/>
        </authorList>
    </citation>
    <scope>GENOME REANNOTATION</scope>
</reference>
<reference key="4">
    <citation type="journal article" date="2003" name="J. Gen. Virol.">
        <authorList>
            <person name="Davison A.J."/>
            <person name="Dolan A."/>
            <person name="Akter P."/>
            <person name="Addison C."/>
            <person name="Dargan D.J."/>
            <person name="Alcendor D.J."/>
            <person name="McGeoch D.J."/>
            <person name="Hayward G.S."/>
        </authorList>
    </citation>
    <scope>ERRATUM OF PUBMED:12533697</scope>
</reference>
<reference key="5">
    <citation type="journal article" date="2002" name="J. Virol.">
        <title>Human cytomegalovirus US7, US8, US9, and US10 are cytoplasmic glycoproteins, not found at cell surfaces, and US9 does not mediate cell-to-cell spread.</title>
        <authorList>
            <person name="Huber M.T."/>
            <person name="Tomazin R."/>
            <person name="Wisner T."/>
            <person name="Boname J."/>
            <person name="Johnson D.C."/>
        </authorList>
    </citation>
    <scope>SUBCELLULAR LOCATION</scope>
</reference>
<feature type="signal peptide" evidence="2">
    <location>
        <begin position="1"/>
        <end position="17"/>
    </location>
</feature>
<feature type="chain" id="PRO_0000037440" description="Unique short US7 glycoprotein">
    <location>
        <begin position="18"/>
        <end position="225"/>
    </location>
</feature>
<feature type="topological domain" description="Lumenal" evidence="2">
    <location>
        <begin position="18"/>
        <end position="170"/>
    </location>
</feature>
<feature type="transmembrane region" description="Helical" evidence="2">
    <location>
        <begin position="171"/>
        <end position="191"/>
    </location>
</feature>
<feature type="topological domain" description="Cytoplasmic" evidence="2">
    <location>
        <begin position="192"/>
        <end position="225"/>
    </location>
</feature>
<feature type="domain" description="Ig-like H-type">
    <location>
        <begin position="54"/>
        <end position="145"/>
    </location>
</feature>
<feature type="glycosylation site" description="N-linked (GlcNAc...) asparagine; by host" evidence="2">
    <location>
        <position position="69"/>
    </location>
</feature>
<feature type="disulfide bond" evidence="1">
    <location>
        <begin position="63"/>
        <end position="141"/>
    </location>
</feature>
<proteinExistence type="inferred from homology"/>
<gene>
    <name type="primary">US7</name>
</gene>
<organism>
    <name type="scientific">Human cytomegalovirus (strain AD169)</name>
    <name type="common">HHV-5</name>
    <name type="synonym">Human herpesvirus 5</name>
    <dbReference type="NCBI Taxonomy" id="10360"/>
    <lineage>
        <taxon>Viruses</taxon>
        <taxon>Duplodnaviria</taxon>
        <taxon>Heunggongvirae</taxon>
        <taxon>Peploviricota</taxon>
        <taxon>Herviviricetes</taxon>
        <taxon>Herpesvirales</taxon>
        <taxon>Orthoherpesviridae</taxon>
        <taxon>Betaherpesvirinae</taxon>
        <taxon>Cytomegalovirus</taxon>
        <taxon>Cytomegalovirus humanbeta5</taxon>
        <taxon>Human cytomegalovirus</taxon>
    </lineage>
</organism>
<accession>P09731</accession>
<accession>Q7M6G4</accession>
<name>US07_HCMVA</name>
<dbReference type="EMBL" id="X17403">
    <property type="protein sequence ID" value="CAA35274.1"/>
    <property type="molecule type" value="Genomic_DNA"/>
</dbReference>
<dbReference type="EMBL" id="X04650">
    <property type="protein sequence ID" value="CAB37099.1"/>
    <property type="molecule type" value="Genomic_DNA"/>
</dbReference>
<dbReference type="EMBL" id="BK000394">
    <property type="protein sequence ID" value="DAA00224.1"/>
    <property type="molecule type" value="Genomic_DNA"/>
</dbReference>
<dbReference type="PIR" id="H26078">
    <property type="entry name" value="QQBEC8"/>
</dbReference>
<dbReference type="GlyCosmos" id="P09731">
    <property type="glycosylation" value="1 site, No reported glycans"/>
</dbReference>
<dbReference type="Proteomes" id="UP000008991">
    <property type="component" value="Segment"/>
</dbReference>
<dbReference type="Proteomes" id="UP000008992">
    <property type="component" value="Segment"/>
</dbReference>
<dbReference type="GO" id="GO:0044167">
    <property type="term" value="C:host cell endoplasmic reticulum membrane"/>
    <property type="evidence" value="ECO:0007669"/>
    <property type="project" value="UniProtKB-SubCell"/>
</dbReference>
<dbReference type="GO" id="GO:0016020">
    <property type="term" value="C:membrane"/>
    <property type="evidence" value="ECO:0007669"/>
    <property type="project" value="UniProtKB-KW"/>
</dbReference>
<dbReference type="GO" id="GO:0052031">
    <property type="term" value="P:symbiont-mediated perturbation of host defense response"/>
    <property type="evidence" value="ECO:0007669"/>
    <property type="project" value="InterPro"/>
</dbReference>
<dbReference type="InterPro" id="IPR012536">
    <property type="entry name" value="CMV_US"/>
</dbReference>
<dbReference type="Pfam" id="PF08001">
    <property type="entry name" value="CMV_US"/>
    <property type="match status" value="1"/>
</dbReference>
<sequence length="225" mass="26270">MRIQLLLVATLVASIVATRVEDMATFRTEKQWQQDLQYRREFVKRQLAPKPKSNIVVSHTVSCVIDGGNMTSVWRFEGQFNPHIASEVILHDTSGLYNVPHEIQNDGQVLTVTVKRSAPADIAKVLISLKPVQLSSGQYECRPQLQLPWVPRPSSFMYDSYRLWYEKRWLTIILYVFMWTYLVTLLQYCIVRFIGTRLFYFLQRNITIRFTGKPTYNLLTYPVKG</sequence>
<protein>
    <recommendedName>
        <fullName>Unique short US7 glycoprotein</fullName>
    </recommendedName>
    <alternativeName>
        <fullName>Protein HXLF5</fullName>
    </alternativeName>
    <alternativeName>
        <fullName>gpUS7</fullName>
    </alternativeName>
</protein>
<evidence type="ECO:0000250" key="1"/>
<evidence type="ECO:0000255" key="2"/>
<evidence type="ECO:0000269" key="3">
    <source>
    </source>
</evidence>
<evidence type="ECO:0000305" key="4"/>
<keyword id="KW-1015">Disulfide bond</keyword>
<keyword id="KW-0325">Glycoprotein</keyword>
<keyword id="KW-1038">Host endoplasmic reticulum</keyword>
<keyword id="KW-1043">Host membrane</keyword>
<keyword id="KW-0393">Immunoglobulin domain</keyword>
<keyword id="KW-0472">Membrane</keyword>
<keyword id="KW-1185">Reference proteome</keyword>
<keyword id="KW-0732">Signal</keyword>
<keyword id="KW-0812">Transmembrane</keyword>
<keyword id="KW-1133">Transmembrane helix</keyword>
<organismHost>
    <name type="scientific">Homo sapiens</name>
    <name type="common">Human</name>
    <dbReference type="NCBI Taxonomy" id="9606"/>
</organismHost>
<comment type="subcellular location">
    <subcellularLocation>
        <location evidence="3">Host endoplasmic reticulum membrane</location>
        <topology evidence="3">Single-pass type I membrane protein</topology>
    </subcellularLocation>
</comment>
<comment type="similarity">
    <text evidence="4">Belongs to the cytomegalovirus US6 family.</text>
</comment>